<feature type="chain" id="PRO_0000374443" description="tRNA-2-methylthio-N(6)-dimethylallyladenosine synthase">
    <location>
        <begin position="1"/>
        <end position="466"/>
    </location>
</feature>
<feature type="domain" description="MTTase N-terminal" evidence="1">
    <location>
        <begin position="21"/>
        <end position="137"/>
    </location>
</feature>
<feature type="domain" description="Radical SAM core" evidence="2">
    <location>
        <begin position="158"/>
        <end position="395"/>
    </location>
</feature>
<feature type="domain" description="TRAM" evidence="1">
    <location>
        <begin position="398"/>
        <end position="466"/>
    </location>
</feature>
<feature type="binding site" evidence="1">
    <location>
        <position position="30"/>
    </location>
    <ligand>
        <name>[4Fe-4S] cluster</name>
        <dbReference type="ChEBI" id="CHEBI:49883"/>
        <label>1</label>
    </ligand>
</feature>
<feature type="binding site" evidence="1">
    <location>
        <position position="66"/>
    </location>
    <ligand>
        <name>[4Fe-4S] cluster</name>
        <dbReference type="ChEBI" id="CHEBI:49883"/>
        <label>1</label>
    </ligand>
</feature>
<feature type="binding site" evidence="1">
    <location>
        <position position="100"/>
    </location>
    <ligand>
        <name>[4Fe-4S] cluster</name>
        <dbReference type="ChEBI" id="CHEBI:49883"/>
        <label>1</label>
    </ligand>
</feature>
<feature type="binding site" evidence="1">
    <location>
        <position position="172"/>
    </location>
    <ligand>
        <name>[4Fe-4S] cluster</name>
        <dbReference type="ChEBI" id="CHEBI:49883"/>
        <label>2</label>
        <note>4Fe-4S-S-AdoMet</note>
    </ligand>
</feature>
<feature type="binding site" evidence="1">
    <location>
        <position position="176"/>
    </location>
    <ligand>
        <name>[4Fe-4S] cluster</name>
        <dbReference type="ChEBI" id="CHEBI:49883"/>
        <label>2</label>
        <note>4Fe-4S-S-AdoMet</note>
    </ligand>
</feature>
<feature type="binding site" evidence="1">
    <location>
        <position position="179"/>
    </location>
    <ligand>
        <name>[4Fe-4S] cluster</name>
        <dbReference type="ChEBI" id="CHEBI:49883"/>
        <label>2</label>
        <note>4Fe-4S-S-AdoMet</note>
    </ligand>
</feature>
<dbReference type="EC" id="2.8.4.3" evidence="1"/>
<dbReference type="EMBL" id="AE017126">
    <property type="protein sequence ID" value="AAQ00423.1"/>
    <property type="molecule type" value="Genomic_DNA"/>
</dbReference>
<dbReference type="RefSeq" id="NP_875770.1">
    <property type="nucleotide sequence ID" value="NC_005042.1"/>
</dbReference>
<dbReference type="RefSeq" id="WP_011125530.1">
    <property type="nucleotide sequence ID" value="NC_005042.1"/>
</dbReference>
<dbReference type="SMR" id="Q7VAS5"/>
<dbReference type="STRING" id="167539.Pro_1379"/>
<dbReference type="EnsemblBacteria" id="AAQ00423">
    <property type="protein sequence ID" value="AAQ00423"/>
    <property type="gene ID" value="Pro_1379"/>
</dbReference>
<dbReference type="KEGG" id="pma:Pro_1379"/>
<dbReference type="PATRIC" id="fig|167539.5.peg.1446"/>
<dbReference type="eggNOG" id="COG0621">
    <property type="taxonomic scope" value="Bacteria"/>
</dbReference>
<dbReference type="HOGENOM" id="CLU_018697_2_2_3"/>
<dbReference type="OrthoDB" id="9805215at2"/>
<dbReference type="Proteomes" id="UP000001420">
    <property type="component" value="Chromosome"/>
</dbReference>
<dbReference type="GO" id="GO:0005737">
    <property type="term" value="C:cytoplasm"/>
    <property type="evidence" value="ECO:0007669"/>
    <property type="project" value="UniProtKB-SubCell"/>
</dbReference>
<dbReference type="GO" id="GO:0051539">
    <property type="term" value="F:4 iron, 4 sulfur cluster binding"/>
    <property type="evidence" value="ECO:0007669"/>
    <property type="project" value="UniProtKB-UniRule"/>
</dbReference>
<dbReference type="GO" id="GO:0046872">
    <property type="term" value="F:metal ion binding"/>
    <property type="evidence" value="ECO:0007669"/>
    <property type="project" value="UniProtKB-KW"/>
</dbReference>
<dbReference type="GO" id="GO:0035596">
    <property type="term" value="F:methylthiotransferase activity"/>
    <property type="evidence" value="ECO:0007669"/>
    <property type="project" value="InterPro"/>
</dbReference>
<dbReference type="GO" id="GO:0035600">
    <property type="term" value="P:tRNA methylthiolation"/>
    <property type="evidence" value="ECO:0007669"/>
    <property type="project" value="TreeGrafter"/>
</dbReference>
<dbReference type="CDD" id="cd01335">
    <property type="entry name" value="Radical_SAM"/>
    <property type="match status" value="1"/>
</dbReference>
<dbReference type="FunFam" id="3.40.50.12160:FF:000006">
    <property type="entry name" value="tRNA-2-methylthio-N(6)-dimethylallyladenosine synthase"/>
    <property type="match status" value="1"/>
</dbReference>
<dbReference type="FunFam" id="3.80.30.20:FF:000001">
    <property type="entry name" value="tRNA-2-methylthio-N(6)-dimethylallyladenosine synthase 2"/>
    <property type="match status" value="1"/>
</dbReference>
<dbReference type="Gene3D" id="3.30.750.200">
    <property type="match status" value="1"/>
</dbReference>
<dbReference type="Gene3D" id="3.30.750.210">
    <property type="match status" value="1"/>
</dbReference>
<dbReference type="Gene3D" id="3.40.50.12160">
    <property type="entry name" value="Methylthiotransferase, N-terminal domain"/>
    <property type="match status" value="1"/>
</dbReference>
<dbReference type="HAMAP" id="MF_01864">
    <property type="entry name" value="tRNA_metthiotr_MiaB"/>
    <property type="match status" value="1"/>
</dbReference>
<dbReference type="InterPro" id="IPR006638">
    <property type="entry name" value="Elp3/MiaA/NifB-like_rSAM"/>
</dbReference>
<dbReference type="InterPro" id="IPR005839">
    <property type="entry name" value="Methylthiotransferase"/>
</dbReference>
<dbReference type="InterPro" id="IPR020612">
    <property type="entry name" value="Methylthiotransferase_CS"/>
</dbReference>
<dbReference type="InterPro" id="IPR013848">
    <property type="entry name" value="Methylthiotransferase_N"/>
</dbReference>
<dbReference type="InterPro" id="IPR038135">
    <property type="entry name" value="Methylthiotransferase_N_sf"/>
</dbReference>
<dbReference type="InterPro" id="IPR006463">
    <property type="entry name" value="MiaB_methiolase"/>
</dbReference>
<dbReference type="InterPro" id="IPR007197">
    <property type="entry name" value="rSAM"/>
</dbReference>
<dbReference type="InterPro" id="IPR002792">
    <property type="entry name" value="TRAM_dom"/>
</dbReference>
<dbReference type="NCBIfam" id="TIGR01574">
    <property type="entry name" value="miaB-methiolase"/>
    <property type="match status" value="1"/>
</dbReference>
<dbReference type="NCBIfam" id="TIGR00089">
    <property type="entry name" value="MiaB/RimO family radical SAM methylthiotransferase"/>
    <property type="match status" value="1"/>
</dbReference>
<dbReference type="PANTHER" id="PTHR43020">
    <property type="entry name" value="CDK5 REGULATORY SUBUNIT-ASSOCIATED PROTEIN 1"/>
    <property type="match status" value="1"/>
</dbReference>
<dbReference type="PANTHER" id="PTHR43020:SF2">
    <property type="entry name" value="MITOCHONDRIAL TRNA METHYLTHIOTRANSFERASE CDK5RAP1"/>
    <property type="match status" value="1"/>
</dbReference>
<dbReference type="Pfam" id="PF04055">
    <property type="entry name" value="Radical_SAM"/>
    <property type="match status" value="1"/>
</dbReference>
<dbReference type="Pfam" id="PF01938">
    <property type="entry name" value="TRAM"/>
    <property type="match status" value="1"/>
</dbReference>
<dbReference type="Pfam" id="PF00919">
    <property type="entry name" value="UPF0004"/>
    <property type="match status" value="1"/>
</dbReference>
<dbReference type="SFLD" id="SFLDF00273">
    <property type="entry name" value="(dimethylallyl)adenosine_tRNA"/>
    <property type="match status" value="1"/>
</dbReference>
<dbReference type="SFLD" id="SFLDG01082">
    <property type="entry name" value="B12-binding_domain_containing"/>
    <property type="match status" value="1"/>
</dbReference>
<dbReference type="SFLD" id="SFLDS00029">
    <property type="entry name" value="Radical_SAM"/>
    <property type="match status" value="1"/>
</dbReference>
<dbReference type="SMART" id="SM00729">
    <property type="entry name" value="Elp3"/>
    <property type="match status" value="1"/>
</dbReference>
<dbReference type="SUPFAM" id="SSF102114">
    <property type="entry name" value="Radical SAM enzymes"/>
    <property type="match status" value="1"/>
</dbReference>
<dbReference type="PROSITE" id="PS51449">
    <property type="entry name" value="MTTASE_N"/>
    <property type="match status" value="1"/>
</dbReference>
<dbReference type="PROSITE" id="PS01278">
    <property type="entry name" value="MTTASE_RADICAL"/>
    <property type="match status" value="1"/>
</dbReference>
<dbReference type="PROSITE" id="PS51918">
    <property type="entry name" value="RADICAL_SAM"/>
    <property type="match status" value="1"/>
</dbReference>
<dbReference type="PROSITE" id="PS50926">
    <property type="entry name" value="TRAM"/>
    <property type="match status" value="1"/>
</dbReference>
<name>MIAB_PROMA</name>
<accession>Q7VAS5</accession>
<gene>
    <name evidence="1" type="primary">miaB</name>
    <name type="ordered locus">Pro_1379</name>
</gene>
<evidence type="ECO:0000255" key="1">
    <source>
        <dbReference type="HAMAP-Rule" id="MF_01864"/>
    </source>
</evidence>
<evidence type="ECO:0000255" key="2">
    <source>
        <dbReference type="PROSITE-ProRule" id="PRU01266"/>
    </source>
</evidence>
<comment type="function">
    <text evidence="1">Catalyzes the methylthiolation of N6-(dimethylallyl)adenosine (i(6)A), leading to the formation of 2-methylthio-N6-(dimethylallyl)adenosine (ms(2)i(6)A) at position 37 in tRNAs that read codons beginning with uridine.</text>
</comment>
<comment type="catalytic activity">
    <reaction evidence="1">
        <text>N(6)-dimethylallyladenosine(37) in tRNA + (sulfur carrier)-SH + AH2 + 2 S-adenosyl-L-methionine = 2-methylsulfanyl-N(6)-dimethylallyladenosine(37) in tRNA + (sulfur carrier)-H + 5'-deoxyadenosine + L-methionine + A + S-adenosyl-L-homocysteine + 2 H(+)</text>
        <dbReference type="Rhea" id="RHEA:37067"/>
        <dbReference type="Rhea" id="RHEA-COMP:10375"/>
        <dbReference type="Rhea" id="RHEA-COMP:10376"/>
        <dbReference type="Rhea" id="RHEA-COMP:14737"/>
        <dbReference type="Rhea" id="RHEA-COMP:14739"/>
        <dbReference type="ChEBI" id="CHEBI:13193"/>
        <dbReference type="ChEBI" id="CHEBI:15378"/>
        <dbReference type="ChEBI" id="CHEBI:17319"/>
        <dbReference type="ChEBI" id="CHEBI:17499"/>
        <dbReference type="ChEBI" id="CHEBI:29917"/>
        <dbReference type="ChEBI" id="CHEBI:57844"/>
        <dbReference type="ChEBI" id="CHEBI:57856"/>
        <dbReference type="ChEBI" id="CHEBI:59789"/>
        <dbReference type="ChEBI" id="CHEBI:64428"/>
        <dbReference type="ChEBI" id="CHEBI:74415"/>
        <dbReference type="ChEBI" id="CHEBI:74417"/>
        <dbReference type="EC" id="2.8.4.3"/>
    </reaction>
</comment>
<comment type="cofactor">
    <cofactor evidence="1">
        <name>[4Fe-4S] cluster</name>
        <dbReference type="ChEBI" id="CHEBI:49883"/>
    </cofactor>
    <text evidence="1">Binds 2 [4Fe-4S] clusters. One cluster is coordinated with 3 cysteines and an exchangeable S-adenosyl-L-methionine.</text>
</comment>
<comment type="subunit">
    <text evidence="1">Monomer.</text>
</comment>
<comment type="subcellular location">
    <subcellularLocation>
        <location evidence="1">Cytoplasm</location>
    </subcellularLocation>
</comment>
<comment type="similarity">
    <text evidence="1">Belongs to the methylthiotransferase family. MiaB subfamily.</text>
</comment>
<organism>
    <name type="scientific">Prochlorococcus marinus (strain SARG / CCMP1375 / SS120)</name>
    <dbReference type="NCBI Taxonomy" id="167539"/>
    <lineage>
        <taxon>Bacteria</taxon>
        <taxon>Bacillati</taxon>
        <taxon>Cyanobacteriota</taxon>
        <taxon>Cyanophyceae</taxon>
        <taxon>Synechococcales</taxon>
        <taxon>Prochlorococcaceae</taxon>
        <taxon>Prochlorococcus</taxon>
    </lineage>
</organism>
<protein>
    <recommendedName>
        <fullName evidence="1">tRNA-2-methylthio-N(6)-dimethylallyladenosine synthase</fullName>
        <ecNumber evidence="1">2.8.4.3</ecNumber>
    </recommendedName>
    <alternativeName>
        <fullName evidence="1">(Dimethylallyl)adenosine tRNA methylthiotransferase MiaB</fullName>
    </alternativeName>
    <alternativeName>
        <fullName evidence="1">tRNA-i(6)A37 methylthiotransferase</fullName>
    </alternativeName>
</protein>
<sequence>MIQTKSETITREFTTSAKNRGSYWITTFGCQMNKADSERMAGILQAMGYQKAKTELCADLVLYNTCTIRDNAEQKVYSYLGRQAIRKKSSPHLKLVVAGCVAQQEGESLLRRVPELDLVMGPQHANRLEDLLNQVDNGQQVVATEEHLILEDLTAARRDSNICAWVNVIYGCNERCTYCVVPSVRGKEQSREPKAIKLEIEDLAKKGFKEVTLLGQNIDAYGRDLPGISSSGRRENTLTDLLYFIHDINGINRIRFATSHPRYFTTRLIEACAELPKLCEHFHIPFQSGDNEVLKRMGRGYTIEKYRRIIDKIRELMPNSSISSDVIVAFPGEDESQFQNTLKIIREIGFDQVNTAAYSQRPNTPAASWAEQLPESVKIDRLKELNLLVEQTAKDKNTRYHNQIVEVLAEGINPKNQEQLMGRTRTNRLTFFSKIGPKKYSYNPGDLVKVKISEIRAFSLTGSPIQ</sequence>
<proteinExistence type="inferred from homology"/>
<reference key="1">
    <citation type="journal article" date="2003" name="Proc. Natl. Acad. Sci. U.S.A.">
        <title>Genome sequence of the cyanobacterium Prochlorococcus marinus SS120, a nearly minimal oxyphototrophic genome.</title>
        <authorList>
            <person name="Dufresne A."/>
            <person name="Salanoubat M."/>
            <person name="Partensky F."/>
            <person name="Artiguenave F."/>
            <person name="Axmann I.M."/>
            <person name="Barbe V."/>
            <person name="Duprat S."/>
            <person name="Galperin M.Y."/>
            <person name="Koonin E.V."/>
            <person name="Le Gall F."/>
            <person name="Makarova K.S."/>
            <person name="Ostrowski M."/>
            <person name="Oztas S."/>
            <person name="Robert C."/>
            <person name="Rogozin I.B."/>
            <person name="Scanlan D.J."/>
            <person name="Tandeau de Marsac N."/>
            <person name="Weissenbach J."/>
            <person name="Wincker P."/>
            <person name="Wolf Y.I."/>
            <person name="Hess W.R."/>
        </authorList>
    </citation>
    <scope>NUCLEOTIDE SEQUENCE [LARGE SCALE GENOMIC DNA]</scope>
    <source>
        <strain>SARG / CCMP1375 / SS120</strain>
    </source>
</reference>
<keyword id="KW-0004">4Fe-4S</keyword>
<keyword id="KW-0963">Cytoplasm</keyword>
<keyword id="KW-0408">Iron</keyword>
<keyword id="KW-0411">Iron-sulfur</keyword>
<keyword id="KW-0479">Metal-binding</keyword>
<keyword id="KW-1185">Reference proteome</keyword>
<keyword id="KW-0949">S-adenosyl-L-methionine</keyword>
<keyword id="KW-0808">Transferase</keyword>
<keyword id="KW-0819">tRNA processing</keyword>